<proteinExistence type="evidence at protein level"/>
<gene>
    <name type="primary">Arid1a</name>
    <name type="synonym">Baf250</name>
    <name type="synonym">Baf250a</name>
    <name type="synonym">Osa1</name>
    <name type="synonym">Smarcf1</name>
</gene>
<dbReference type="EMBL" id="AF268912">
    <property type="protein sequence ID" value="AAK54504.1"/>
    <property type="molecule type" value="mRNA"/>
</dbReference>
<dbReference type="EMBL" id="BX537327">
    <property type="status" value="NOT_ANNOTATED_CDS"/>
    <property type="molecule type" value="Genomic_DNA"/>
</dbReference>
<dbReference type="EMBL" id="CR751606">
    <property type="status" value="NOT_ANNOTATED_CDS"/>
    <property type="molecule type" value="Genomic_DNA"/>
</dbReference>
<dbReference type="EMBL" id="CR925752">
    <property type="status" value="NOT_ANNOTATED_CDS"/>
    <property type="molecule type" value="Genomic_DNA"/>
</dbReference>
<dbReference type="EMBL" id="BC082554">
    <property type="protein sequence ID" value="AAH82554.1"/>
    <property type="molecule type" value="mRNA"/>
</dbReference>
<dbReference type="CCDS" id="CCDS38908.1">
    <molecule id="A2BH40-1"/>
</dbReference>
<dbReference type="CCDS" id="CCDS89836.1">
    <molecule id="A2BH40-4"/>
</dbReference>
<dbReference type="RefSeq" id="NP_001074288.1">
    <molecule id="A2BH40-1"/>
    <property type="nucleotide sequence ID" value="NM_001080819.2"/>
</dbReference>
<dbReference type="RefSeq" id="NP_001349999.1">
    <molecule id="A2BH40-4"/>
    <property type="nucleotide sequence ID" value="NM_001363070.2"/>
</dbReference>
<dbReference type="RefSeq" id="NP_001388204.1">
    <molecule id="A2BH40-4"/>
    <property type="nucleotide sequence ID" value="NM_001401275.1"/>
</dbReference>
<dbReference type="RefSeq" id="NP_001388205.1">
    <molecule id="A2BH40-4"/>
    <property type="nucleotide sequence ID" value="NM_001401276.1"/>
</dbReference>
<dbReference type="RefSeq" id="XP_006539390.1">
    <molecule id="A2BH40-2"/>
    <property type="nucleotide sequence ID" value="XM_006539327.5"/>
</dbReference>
<dbReference type="RefSeq" id="XP_030109803.1">
    <molecule id="A2BH40-2"/>
    <property type="nucleotide sequence ID" value="XM_030253943.2"/>
</dbReference>
<dbReference type="BMRB" id="A2BH40"/>
<dbReference type="SMR" id="A2BH40"/>
<dbReference type="BioGRID" id="220298">
    <property type="interactions" value="43"/>
</dbReference>
<dbReference type="ComplexPortal" id="CPX-1232">
    <property type="entry name" value="SWI/SNF ATP-dependent chromatin remodeling complex, ACTL6A-ARID1A-SMARCA2 variant"/>
</dbReference>
<dbReference type="ComplexPortal" id="CPX-1233">
    <property type="entry name" value="SWI/SNF ATP-dependent chromatin remodeling complex, ACTL6A-ARID1A-SMARCA4 variant"/>
</dbReference>
<dbReference type="ComplexPortal" id="CPX-1236">
    <property type="entry name" value="SWI/SNF ATP-dependent chromatin remodeling complex, ACTL6B-ARID1A-SMARCA2 variant"/>
</dbReference>
<dbReference type="ComplexPortal" id="CPX-1237">
    <property type="entry name" value="SWI/SNF ATP-dependent chromatin remodeling complex, ACTL6B-ARID1A-SMARCA4 variant"/>
</dbReference>
<dbReference type="ComplexPortal" id="CPX-1240">
    <property type="entry name" value="Muscle cell-specific SWI/SNF ATP-dependent chromatin remodeling complex, ACTL6A-ARID1A-SMARCA2 variant"/>
</dbReference>
<dbReference type="ComplexPortal" id="CPX-1241">
    <property type="entry name" value="Muscle cell-specific SWI/SNF ATP-dependent chromatin remodeling complex, ACTL6A-ARID1A-SMARCA4 variant"/>
</dbReference>
<dbReference type="ComplexPortal" id="CPX-1244">
    <property type="entry name" value="Muscle cell-specific SWI/SNF ATP-dependent chromatin remodeling complex, ACTL6B-ARID1A-SMARCA2 variant"/>
</dbReference>
<dbReference type="ComplexPortal" id="CPX-1245">
    <property type="entry name" value="Muscle cell-specific SWI/SNF ATP-dependent chromatin remodeling complex, ACTL6B-ARID1A-SMARCA4 variant"/>
</dbReference>
<dbReference type="ComplexPortal" id="CPX-1251">
    <property type="entry name" value="Embryonic stem cell-specific SWI/SNF ATP-dependent chromatin remodeling complex"/>
</dbReference>
<dbReference type="ComplexPortal" id="CPX-1252">
    <property type="entry name" value="Neural progenitor-specific SWI/SNF ATP-dependent chromatin remodeling complex, ARID1A-SMARCA2 variant"/>
</dbReference>
<dbReference type="ComplexPortal" id="CPX-1253">
    <property type="entry name" value="Neural progenitor-specific SWI/SNF ATP-dependent chromatin remodeling complex, ARID1A-SMARCA4 variant"/>
</dbReference>
<dbReference type="ComplexPortal" id="CPX-1256">
    <property type="entry name" value="Neuron-specific SWI/SNF ATP-dependent chromatin remodeling complex, ARID1A-SMARCA2 variant"/>
</dbReference>
<dbReference type="ComplexPortal" id="CPX-1257">
    <property type="entry name" value="Neuron-specific SWI/SNF ATP-dependent chromatin remodeling complex, ARID1A-SMARCA4 variant"/>
</dbReference>
<dbReference type="ComplexPortal" id="CPX-1261">
    <property type="entry name" value="Brain-specific SWI/SNF ATP-dependent chromatin remodeling complex, ARID1A-SMARCA2 variant"/>
</dbReference>
<dbReference type="ComplexPortal" id="CPX-1262">
    <property type="entry name" value="Brain-specific SWI/SNF ATP-dependent chromatin remodeling complex, ARID1A-SMARCA4 variant"/>
</dbReference>
<dbReference type="DIP" id="DIP-58952N"/>
<dbReference type="FunCoup" id="A2BH40">
    <property type="interactions" value="3984"/>
</dbReference>
<dbReference type="IntAct" id="A2BH40">
    <property type="interactions" value="22"/>
</dbReference>
<dbReference type="MINT" id="A2BH40"/>
<dbReference type="STRING" id="10090.ENSMUSP00000101517"/>
<dbReference type="GlyConnect" id="2144">
    <property type="glycosylation" value="1 N-Linked glycan (1 site)"/>
</dbReference>
<dbReference type="GlyCosmos" id="A2BH40">
    <property type="glycosylation" value="1 site, 1 glycan"/>
</dbReference>
<dbReference type="GlyGen" id="A2BH40">
    <property type="glycosylation" value="11 sites, 2 N-linked glycans (2 sites), 1 O-linked glycan (5 sites)"/>
</dbReference>
<dbReference type="iPTMnet" id="A2BH40"/>
<dbReference type="PhosphoSitePlus" id="A2BH40"/>
<dbReference type="SwissPalm" id="A2BH40"/>
<dbReference type="jPOST" id="A2BH40"/>
<dbReference type="PaxDb" id="10090-ENSMUSP00000122354"/>
<dbReference type="PeptideAtlas" id="A2BH40"/>
<dbReference type="ProteomicsDB" id="283266">
    <molecule id="A2BH40-1"/>
</dbReference>
<dbReference type="ProteomicsDB" id="283267">
    <molecule id="A2BH40-2"/>
</dbReference>
<dbReference type="ProteomicsDB" id="283268">
    <molecule id="A2BH40-3"/>
</dbReference>
<dbReference type="ProteomicsDB" id="283269">
    <molecule id="A2BH40-4"/>
</dbReference>
<dbReference type="Pumba" id="A2BH40"/>
<dbReference type="Antibodypedia" id="1691">
    <property type="antibodies" value="250 antibodies from 34 providers"/>
</dbReference>
<dbReference type="Ensembl" id="ENSMUST00000008024.7">
    <molecule id="A2BH40-4"/>
    <property type="protein sequence ID" value="ENSMUSP00000008024.7"/>
    <property type="gene ID" value="ENSMUSG00000007880.17"/>
</dbReference>
<dbReference type="Ensembl" id="ENSMUST00000105897.10">
    <molecule id="A2BH40-1"/>
    <property type="protein sequence ID" value="ENSMUSP00000101517.4"/>
    <property type="gene ID" value="ENSMUSG00000007880.17"/>
</dbReference>
<dbReference type="GeneID" id="93760"/>
<dbReference type="KEGG" id="mmu:93760"/>
<dbReference type="UCSC" id="uc008vdh.1">
    <molecule id="A2BH40-1"/>
    <property type="organism name" value="mouse"/>
</dbReference>
<dbReference type="UCSC" id="uc008vdj.1">
    <molecule id="A2BH40-4"/>
    <property type="organism name" value="mouse"/>
</dbReference>
<dbReference type="AGR" id="MGI:1935147"/>
<dbReference type="CTD" id="8289"/>
<dbReference type="MGI" id="MGI:1935147">
    <property type="gene designation" value="Arid1a"/>
</dbReference>
<dbReference type="VEuPathDB" id="HostDB:ENSMUSG00000007880"/>
<dbReference type="eggNOG" id="KOG2510">
    <property type="taxonomic scope" value="Eukaryota"/>
</dbReference>
<dbReference type="GeneTree" id="ENSGT00940000155194"/>
<dbReference type="HOGENOM" id="CLU_000974_1_1_1"/>
<dbReference type="InParanoid" id="A2BH40"/>
<dbReference type="OMA" id="CRPIDMD"/>
<dbReference type="PhylomeDB" id="A2BH40"/>
<dbReference type="Reactome" id="R-MMU-3214858">
    <property type="pathway name" value="RMTs methylate histone arginines"/>
</dbReference>
<dbReference type="Reactome" id="R-MMU-8939243">
    <property type="pathway name" value="RUNX1 interacts with co-factors whose precise effect on RUNX1 targets is not known"/>
</dbReference>
<dbReference type="BioGRID-ORCS" id="93760">
    <property type="hits" value="10 hits in 90 CRISPR screens"/>
</dbReference>
<dbReference type="ChiTaRS" id="Arid1a">
    <property type="organism name" value="mouse"/>
</dbReference>
<dbReference type="PRO" id="PR:A2BH40"/>
<dbReference type="Proteomes" id="UP000000589">
    <property type="component" value="Chromosome 4"/>
</dbReference>
<dbReference type="RNAct" id="A2BH40">
    <property type="molecule type" value="protein"/>
</dbReference>
<dbReference type="Bgee" id="ENSMUSG00000007880">
    <property type="expression patterns" value="Expressed in animal zygote and 283 other cell types or tissues"/>
</dbReference>
<dbReference type="ExpressionAtlas" id="A2BH40">
    <property type="expression patterns" value="baseline and differential"/>
</dbReference>
<dbReference type="GO" id="GO:0140092">
    <property type="term" value="C:bBAF complex"/>
    <property type="evidence" value="ECO:0000303"/>
    <property type="project" value="ComplexPortal"/>
</dbReference>
<dbReference type="GO" id="GO:0035060">
    <property type="term" value="C:brahma complex"/>
    <property type="evidence" value="ECO:0000303"/>
    <property type="project" value="ComplexPortal"/>
</dbReference>
<dbReference type="GO" id="GO:0000785">
    <property type="term" value="C:chromatin"/>
    <property type="evidence" value="ECO:0000314"/>
    <property type="project" value="MGI"/>
</dbReference>
<dbReference type="GO" id="GO:0071565">
    <property type="term" value="C:nBAF complex"/>
    <property type="evidence" value="ECO:0000314"/>
    <property type="project" value="UniProtKB"/>
</dbReference>
<dbReference type="GO" id="GO:0071564">
    <property type="term" value="C:npBAF complex"/>
    <property type="evidence" value="ECO:0000314"/>
    <property type="project" value="UniProtKB"/>
</dbReference>
<dbReference type="GO" id="GO:0005654">
    <property type="term" value="C:nucleoplasm"/>
    <property type="evidence" value="ECO:0000304"/>
    <property type="project" value="Reactome"/>
</dbReference>
<dbReference type="GO" id="GO:0016514">
    <property type="term" value="C:SWI/SNF complex"/>
    <property type="evidence" value="ECO:0000314"/>
    <property type="project" value="MGI"/>
</dbReference>
<dbReference type="GO" id="GO:0140658">
    <property type="term" value="F:ATP-dependent chromatin remodeler activity"/>
    <property type="evidence" value="ECO:0000314"/>
    <property type="project" value="MGI"/>
</dbReference>
<dbReference type="GO" id="GO:0003677">
    <property type="term" value="F:DNA binding"/>
    <property type="evidence" value="ECO:0000266"/>
    <property type="project" value="MGI"/>
</dbReference>
<dbReference type="GO" id="GO:0003205">
    <property type="term" value="P:cardiac chamber development"/>
    <property type="evidence" value="ECO:0000315"/>
    <property type="project" value="MGI"/>
</dbReference>
<dbReference type="GO" id="GO:0055007">
    <property type="term" value="P:cardiac muscle cell differentiation"/>
    <property type="evidence" value="ECO:0000315"/>
    <property type="project" value="MGI"/>
</dbReference>
<dbReference type="GO" id="GO:0006325">
    <property type="term" value="P:chromatin organization"/>
    <property type="evidence" value="ECO:0000353"/>
    <property type="project" value="MGI"/>
</dbReference>
<dbReference type="GO" id="GO:0006338">
    <property type="term" value="P:chromatin remodeling"/>
    <property type="evidence" value="ECO:0000315"/>
    <property type="project" value="MGI"/>
</dbReference>
<dbReference type="GO" id="GO:0007566">
    <property type="term" value="P:embryo implantation"/>
    <property type="evidence" value="ECO:0000315"/>
    <property type="project" value="MGI"/>
</dbReference>
<dbReference type="GO" id="GO:0030900">
    <property type="term" value="P:forebrain development"/>
    <property type="evidence" value="ECO:0000315"/>
    <property type="project" value="MGI"/>
</dbReference>
<dbReference type="GO" id="GO:0001704">
    <property type="term" value="P:formation of primary germ layer"/>
    <property type="evidence" value="ECO:0000315"/>
    <property type="project" value="MGI"/>
</dbReference>
<dbReference type="GO" id="GO:0007369">
    <property type="term" value="P:gastrulation"/>
    <property type="evidence" value="ECO:0000315"/>
    <property type="project" value="MGI"/>
</dbReference>
<dbReference type="GO" id="GO:0000122">
    <property type="term" value="P:negative regulation of transcription by RNA polymerase II"/>
    <property type="evidence" value="ECO:0000314"/>
    <property type="project" value="MGI"/>
</dbReference>
<dbReference type="GO" id="GO:0001843">
    <property type="term" value="P:neural tube closure"/>
    <property type="evidence" value="ECO:0000315"/>
    <property type="project" value="MGI"/>
</dbReference>
<dbReference type="GO" id="GO:0003408">
    <property type="term" value="P:optic cup formation involved in camera-type eye development"/>
    <property type="evidence" value="ECO:0000315"/>
    <property type="project" value="MGI"/>
</dbReference>
<dbReference type="GO" id="GO:0060674">
    <property type="term" value="P:placenta blood vessel development"/>
    <property type="evidence" value="ECO:0000315"/>
    <property type="project" value="MGI"/>
</dbReference>
<dbReference type="GO" id="GO:0045597">
    <property type="term" value="P:positive regulation of cell differentiation"/>
    <property type="evidence" value="ECO:0000303"/>
    <property type="project" value="ComplexPortal"/>
</dbReference>
<dbReference type="GO" id="GO:0045893">
    <property type="term" value="P:positive regulation of DNA-templated transcription"/>
    <property type="evidence" value="ECO:0000250"/>
    <property type="project" value="UniProtKB"/>
</dbReference>
<dbReference type="GO" id="GO:2000781">
    <property type="term" value="P:positive regulation of double-strand break repair"/>
    <property type="evidence" value="ECO:0000303"/>
    <property type="project" value="ComplexPortal"/>
</dbReference>
<dbReference type="GO" id="GO:0045663">
    <property type="term" value="P:positive regulation of myoblast differentiation"/>
    <property type="evidence" value="ECO:0000303"/>
    <property type="project" value="ComplexPortal"/>
</dbReference>
<dbReference type="GO" id="GO:1902459">
    <property type="term" value="P:positive regulation of stem cell population maintenance"/>
    <property type="evidence" value="ECO:0000303"/>
    <property type="project" value="ComplexPortal"/>
</dbReference>
<dbReference type="GO" id="GO:0045582">
    <property type="term" value="P:positive regulation of T cell differentiation"/>
    <property type="evidence" value="ECO:0000303"/>
    <property type="project" value="ComplexPortal"/>
</dbReference>
<dbReference type="GO" id="GO:0070316">
    <property type="term" value="P:regulation of G0 to G1 transition"/>
    <property type="evidence" value="ECO:0000303"/>
    <property type="project" value="ComplexPortal"/>
</dbReference>
<dbReference type="GO" id="GO:2000045">
    <property type="term" value="P:regulation of G1/S transition of mitotic cell cycle"/>
    <property type="evidence" value="ECO:0000303"/>
    <property type="project" value="ComplexPortal"/>
</dbReference>
<dbReference type="GO" id="GO:0030071">
    <property type="term" value="P:regulation of mitotic metaphase/anaphase transition"/>
    <property type="evidence" value="ECO:0000303"/>
    <property type="project" value="ComplexPortal"/>
</dbReference>
<dbReference type="GO" id="GO:2000819">
    <property type="term" value="P:regulation of nucleotide-excision repair"/>
    <property type="evidence" value="ECO:0000303"/>
    <property type="project" value="ComplexPortal"/>
</dbReference>
<dbReference type="GO" id="GO:0006357">
    <property type="term" value="P:regulation of transcription by RNA polymerase II"/>
    <property type="evidence" value="ECO:0000303"/>
    <property type="project" value="ComplexPortal"/>
</dbReference>
<dbReference type="GO" id="GO:0019827">
    <property type="term" value="P:stem cell population maintenance"/>
    <property type="evidence" value="ECO:0000315"/>
    <property type="project" value="MGI"/>
</dbReference>
<dbReference type="CDD" id="cd16876">
    <property type="entry name" value="ARID_ARID1A"/>
    <property type="match status" value="1"/>
</dbReference>
<dbReference type="FunFam" id="1.10.150.60:FF:000002">
    <property type="entry name" value="AT-rich interactive domain-containing protein 1B"/>
    <property type="match status" value="1"/>
</dbReference>
<dbReference type="Gene3D" id="1.10.150.60">
    <property type="entry name" value="ARID DNA-binding domain"/>
    <property type="match status" value="1"/>
</dbReference>
<dbReference type="Gene3D" id="1.25.10.10">
    <property type="entry name" value="Leucine-rich Repeat Variant"/>
    <property type="match status" value="1"/>
</dbReference>
<dbReference type="InterPro" id="IPR030094">
    <property type="entry name" value="ARID1A_ARID_BRIGHT_DNA-bd"/>
</dbReference>
<dbReference type="InterPro" id="IPR001606">
    <property type="entry name" value="ARID_dom"/>
</dbReference>
<dbReference type="InterPro" id="IPR036431">
    <property type="entry name" value="ARID_dom_sf"/>
</dbReference>
<dbReference type="InterPro" id="IPR011989">
    <property type="entry name" value="ARM-like"/>
</dbReference>
<dbReference type="InterPro" id="IPR016024">
    <property type="entry name" value="ARM-type_fold"/>
</dbReference>
<dbReference type="InterPro" id="IPR021906">
    <property type="entry name" value="BAF250/Osa"/>
</dbReference>
<dbReference type="InterPro" id="IPR033388">
    <property type="entry name" value="BAF250_C"/>
</dbReference>
<dbReference type="PANTHER" id="PTHR12656:SF12">
    <property type="entry name" value="AT-RICH INTERACTIVE DOMAIN-CONTAINING PROTEIN 1A"/>
    <property type="match status" value="1"/>
</dbReference>
<dbReference type="PANTHER" id="PTHR12656">
    <property type="entry name" value="BRG-1 ASSOCIATED FACTOR 250 BAF250"/>
    <property type="match status" value="1"/>
</dbReference>
<dbReference type="Pfam" id="PF01388">
    <property type="entry name" value="ARID"/>
    <property type="match status" value="1"/>
</dbReference>
<dbReference type="Pfam" id="PF12031">
    <property type="entry name" value="BAF250_C"/>
    <property type="match status" value="1"/>
</dbReference>
<dbReference type="SMART" id="SM01014">
    <property type="entry name" value="ARID"/>
    <property type="match status" value="1"/>
</dbReference>
<dbReference type="SMART" id="SM00501">
    <property type="entry name" value="BRIGHT"/>
    <property type="match status" value="1"/>
</dbReference>
<dbReference type="SUPFAM" id="SSF46774">
    <property type="entry name" value="ARID-like"/>
    <property type="match status" value="1"/>
</dbReference>
<dbReference type="SUPFAM" id="SSF48371">
    <property type="entry name" value="ARM repeat"/>
    <property type="match status" value="1"/>
</dbReference>
<dbReference type="PROSITE" id="PS51011">
    <property type="entry name" value="ARID"/>
    <property type="match status" value="1"/>
</dbReference>
<accession>A2BH40</accession>
<accession>Q640Q1</accession>
<accession>Q925Q1</accession>
<name>ARI1A_MOUSE</name>
<reference key="1">
    <citation type="journal article" date="2001" name="Genomics">
        <title>Characterization of mammalian orthologues of the Drosophila osa gene: cDNA cloning, expression, chromosomal localization, and direct physical interaction with Brahma chromatin-remodeling complex.</title>
        <authorList>
            <person name="Kozmik Z."/>
            <person name="Machon O."/>
            <person name="Kralova J."/>
            <person name="Kreslova J."/>
            <person name="Paces J."/>
            <person name="Vlcek C."/>
        </authorList>
    </citation>
    <scope>NUCLEOTIDE SEQUENCE [MRNA] (ISOFORM 2)</scope>
    <scope>ALTERNATIVE SPLICING (ISOFORM 3)</scope>
    <scope>TISSUE SPECIFICITY</scope>
    <scope>DEVELOPMENTAL STAGE</scope>
</reference>
<reference key="2">
    <citation type="journal article" date="2009" name="PLoS Biol.">
        <title>Lineage-specific biology revealed by a finished genome assembly of the mouse.</title>
        <authorList>
            <person name="Church D.M."/>
            <person name="Goodstadt L."/>
            <person name="Hillier L.W."/>
            <person name="Zody M.C."/>
            <person name="Goldstein S."/>
            <person name="She X."/>
            <person name="Bult C.J."/>
            <person name="Agarwala R."/>
            <person name="Cherry J.L."/>
            <person name="DiCuccio M."/>
            <person name="Hlavina W."/>
            <person name="Kapustin Y."/>
            <person name="Meric P."/>
            <person name="Maglott D."/>
            <person name="Birtle Z."/>
            <person name="Marques A.C."/>
            <person name="Graves T."/>
            <person name="Zhou S."/>
            <person name="Teague B."/>
            <person name="Potamousis K."/>
            <person name="Churas C."/>
            <person name="Place M."/>
            <person name="Herschleb J."/>
            <person name="Runnheim R."/>
            <person name="Forrest D."/>
            <person name="Amos-Landgraf J."/>
            <person name="Schwartz D.C."/>
            <person name="Cheng Z."/>
            <person name="Lindblad-Toh K."/>
            <person name="Eichler E.E."/>
            <person name="Ponting C.P."/>
        </authorList>
    </citation>
    <scope>NUCLEOTIDE SEQUENCE [LARGE SCALE GENOMIC DNA]</scope>
    <source>
        <strain>C57BL/6J</strain>
    </source>
</reference>
<reference key="3">
    <citation type="journal article" date="2004" name="Genome Res.">
        <title>The status, quality, and expansion of the NIH full-length cDNA project: the Mammalian Gene Collection (MGC).</title>
        <authorList>
            <consortium name="The MGC Project Team"/>
        </authorList>
    </citation>
    <scope>NUCLEOTIDE SEQUENCE [LARGE SCALE MRNA] (ISOFORM 4)</scope>
    <source>
        <strain>C57BL/6J</strain>
        <tissue>Brain</tissue>
    </source>
</reference>
<reference key="4">
    <citation type="journal article" date="2007" name="Neuron">
        <title>An essential switch in subunit composition of a chromatin remodeling complex during neural development.</title>
        <authorList>
            <person name="Lessard J."/>
            <person name="Wu J.I."/>
            <person name="Ranish J.A."/>
            <person name="Wan M."/>
            <person name="Winslow M.M."/>
            <person name="Staahl B.T."/>
            <person name="Wu H."/>
            <person name="Aebersold R."/>
            <person name="Graef I.A."/>
            <person name="Crabtree G.R."/>
        </authorList>
    </citation>
    <scope>FUNCTION OF THE NBAF AND NPBAF COMPLEXES</scope>
    <scope>IDENTIFICATION BY MASS SPECTROMETRY</scope>
    <scope>IDENTIFICATION IN THE NBAF AND NPBAF COMPLEXES</scope>
    <scope>DEVELOPMENTAL STAGE</scope>
</reference>
<reference key="5">
    <citation type="journal article" date="2007" name="Proc. Natl. Acad. Sci. U.S.A.">
        <title>Large-scale phosphorylation analysis of mouse liver.</title>
        <authorList>
            <person name="Villen J."/>
            <person name="Beausoleil S.A."/>
            <person name="Gerber S.A."/>
            <person name="Gygi S.P."/>
        </authorList>
    </citation>
    <scope>PHOSPHORYLATION [LARGE SCALE ANALYSIS] AT SER-697</scope>
    <scope>IDENTIFICATION BY MASS SPECTROMETRY [LARGE SCALE ANALYSIS]</scope>
    <source>
        <tissue>Liver</tissue>
    </source>
</reference>
<reference key="6">
    <citation type="journal article" date="2009" name="Immunity">
        <title>The phagosomal proteome in interferon-gamma-activated macrophages.</title>
        <authorList>
            <person name="Trost M."/>
            <person name="English L."/>
            <person name="Lemieux S."/>
            <person name="Courcelles M."/>
            <person name="Desjardins M."/>
            <person name="Thibault P."/>
        </authorList>
    </citation>
    <scope>PHOSPHORYLATION [LARGE SCALE ANALYSIS] AT SER-365</scope>
    <scope>IDENTIFICATION BY MASS SPECTROMETRY [LARGE SCALE ANALYSIS]</scope>
</reference>
<reference key="7">
    <citation type="journal article" date="2010" name="Cell">
        <title>A tissue-specific atlas of mouse protein phosphorylation and expression.</title>
        <authorList>
            <person name="Huttlin E.L."/>
            <person name="Jedrychowski M.P."/>
            <person name="Elias J.E."/>
            <person name="Goswami T."/>
            <person name="Rad R."/>
            <person name="Beausoleil S.A."/>
            <person name="Villen J."/>
            <person name="Haas W."/>
            <person name="Sowa M.E."/>
            <person name="Gygi S.P."/>
        </authorList>
    </citation>
    <scope>PHOSPHORYLATION [LARGE SCALE ANALYSIS] AT SER-365; SER-384; SER-697; SER-699; SER-703; SER-731; SER-765; SER-773 AND THR-1874</scope>
    <scope>IDENTIFICATION BY MASS SPECTROMETRY [LARGE SCALE ANALYSIS]</scope>
    <source>
        <tissue>Brain</tissue>
        <tissue>Brown adipose tissue</tissue>
        <tissue>Heart</tissue>
        <tissue>Kidney</tissue>
        <tissue>Liver</tissue>
        <tissue>Lung</tissue>
        <tissue>Pancreas</tissue>
        <tissue>Spleen</tissue>
        <tissue>Testis</tissue>
    </source>
</reference>
<reference key="8">
    <citation type="journal article" date="2014" name="Mol. Cell. Proteomics">
        <title>Immunoaffinity enrichment and mass spectrometry analysis of protein methylation.</title>
        <authorList>
            <person name="Guo A."/>
            <person name="Gu H."/>
            <person name="Zhou J."/>
            <person name="Mulhern D."/>
            <person name="Wang Y."/>
            <person name="Lee K.A."/>
            <person name="Yang V."/>
            <person name="Aguiar M."/>
            <person name="Kornhauser J."/>
            <person name="Jia X."/>
            <person name="Ren J."/>
            <person name="Beausoleil S.A."/>
            <person name="Silva J.C."/>
            <person name="Vemulapalli V."/>
            <person name="Bedford M.T."/>
            <person name="Comb M.J."/>
        </authorList>
    </citation>
    <scope>METHYLATION [LARGE SCALE ANALYSIS] AT ARG-431 AND ARG-1277</scope>
    <scope>IDENTIFICATION BY MASS SPECTROMETRY [LARGE SCALE ANALYSIS]</scope>
    <source>
        <tissue>Brain</tissue>
        <tissue>Embryo</tissue>
    </source>
</reference>
<reference key="9">
    <citation type="journal article" date="2012" name="J. Biol. Chem.">
        <title>SWI/SNF chromatin-remodeling factors: multiscale analyses and diverse functions.</title>
        <authorList>
            <person name="Euskirchen G."/>
            <person name="Auerbach R.K."/>
            <person name="Snyder M."/>
        </authorList>
    </citation>
    <scope>REVIEW ON SWI/SNF CHROMATIN REMODELING COMPLEXES</scope>
</reference>
<reference key="10">
    <citation type="journal article" date="2015" name="Sci. Adv.">
        <title>Mammalian SWI/SNF chromatin remodeling complexes and cancer: Mechanistic insights gained from human genomics.</title>
        <authorList>
            <person name="Kadoch C."/>
            <person name="Crabtree G.R."/>
        </authorList>
    </citation>
    <scope>REVIEW ON SWI/SNF CHROMATIN REMODELING COMPLEXES</scope>
</reference>
<reference key="11">
    <citation type="journal article" date="2017" name="Mol. Cell">
        <title>AP-1 Transcription Factors and the BAF Complex Mediate Signal-Dependent Enhancer Selection.</title>
        <authorList>
            <person name="Vierbuchen T."/>
            <person name="Ling E."/>
            <person name="Cowley C.J."/>
            <person name="Couch C.H."/>
            <person name="Wang X."/>
            <person name="Harmin D.A."/>
            <person name="Roberts C.W.M."/>
            <person name="Greenberg M.E."/>
        </authorList>
    </citation>
    <scope>INTERACTION WITH FOS; FOSB; FOSL1 AND FOSL2</scope>
</reference>
<keyword id="KW-0007">Acetylation</keyword>
<keyword id="KW-0025">Alternative splicing</keyword>
<keyword id="KW-0156">Chromatin regulator</keyword>
<keyword id="KW-0238">DNA-binding</keyword>
<keyword id="KW-0488">Methylation</keyword>
<keyword id="KW-0524">Neurogenesis</keyword>
<keyword id="KW-0539">Nucleus</keyword>
<keyword id="KW-0597">Phosphoprotein</keyword>
<keyword id="KW-1185">Reference proteome</keyword>
<keyword id="KW-0804">Transcription</keyword>
<keyword id="KW-0805">Transcription regulation</keyword>
<sequence>MAAQVAPAAASSLGNPPPPPSELKKAEQQQREEAGGEAAAAAAERGEMKAAAGQESEGPAVGPPQPLGKELQDGAESNGGGGGGGAGSGGGPGAEPDLKNSNGNAGPRPALNNNLPEPPGGGGGGGSSSSDGVGAPPHSAAAALPPPAYGFGQAYGRSPSAVAAAAAAVFHQQHGGQQSPGLAALQSGGGGGLEPYAGPQQNSHDHGFPNHQYNSYYPNRSAYPPPPQAYALSSPRGGTPGSGAAAAAGSKPPPSSSASASSSSSSFAQQRFGAMGGGGPSAAGGGTPQPTATPTLNQLLTSPSSARGYQGYPGGDYGGGPQDGGAGKGPADMASQCWGAAAAAAAAAAAVSGGAQQRSHHAPMSPGSSGGGGQPLARTPQSSSPMDQMGKMRPQPYGGTNPYSQQQGPPSGPQQGHGYPGQPYGSQTPQRYPMTMQGRAQSAMGSLSYAQQIPPYGQQGPSAYGQQGQTPYYNQQSPHPQQQPPYAQQPPSQTPHAQPSYQQQPQTQQPQLQSSQPPYSQQPSQPPHQQSPTPYPSQQSTTQQHPQSQPPYSQPQAQSPYQQQQPQQPASSSLSQQAAYPQPQPQQSQQTAYSQQRFPPPQELSQDSFGSQASSAPSMTSSKGGQEDMNLSLQSRPSSLPDLSGSIDDLPMGTEGALSPGVSTSGISSSQGEQSNPAQSPFSPHTSPHLPGIRGPSPSPVGSPASVAQSRSGPLSPAAVPGNQMPPRPPSGQSDSIMHPSMNQSSIAQDRGYMQRNPQMPQYTSPQPGSALSPRQPSGGQMHSGVGSYQQNSMGSYGPQGSQYGPQGGYPRQPNYNALPNANYPNAGMAGSMNPMGAGGQMHGQPGIPPYGTLPPGRMAHASMGNRPYGPNMANMPPQVGSGMCPPPGGMNRKTQESAVAMHVAANSIQNRPPGYPNMNQGGMMGTGPPYGQGINSMAGMINPQGPPYPMGGTMANNSAGMAASPEMMGLGDVKLTPATKMNNKADGTPKTESKSKKSSSSTTTNEKITKLYELGGEPERKMWVDRYLAFTEEKAMGMTNLPAVGRKPLDLYRLYVSVKEIGGLTQVNKNKKWRELATNLNVGTSSSAASSLKKQYIQCLYAFECKIERGEDPPPDIFAAADSKKSQPKIQPPSPAGSGSMQGPQTPQSTSSSMAEGGDLKPPTPASTPHSQIPPLPGMSRSNSVGIQDAFPDGSDPTFQKRNSMTPNPGYQPSMNTSDMMGRMSYEPNKDPYGSMRKAPGSDPFMSSGQGPNGGMGDPYSRAAGPGLGSVAMGPRQHYPYGGPYDRVRTEPGIGPEGNMGTGAPQPNLMPSTPDSGMYSPSRYPPQQQQQQQQQHDSYGNQFSTQGTPSSSPFPSQQTTMYQQQQQNYKRPMDGTYGPPAKRHEGEMYSVPYSAGQGQPQQQQLPAAQSQPASQPQAAQPSPQQDVYNQYSNAYPASATAATDRRPAGGPQNQFPFQFGRDRVSAPPGSSAQQNMPPQMMGGPIQASAEVAQQGTMWQGRNDMTYNYANRQNTGSATQGPAYHGVNRTDEMLHTDQRANHEGPWPSHGTRQPPYGPSAPVPPMTRPPPSNYQPPPSMPNHIPQVSSPAPLPRPMENRTSPSKSPFLHSGMKMQKAGPPVPASHIAPTPVQPPMIRRDITFPPGSVEATQPVLKQRRRLTMKDIGTPEAWRVMMSLKSGLLAESTWALDTINILLYDDNSIMTFNLSQLPGLLELLVEYFRRCLIEIFGILKEYEVGDPGQRTLLDPGRFTKVYSPAHTEEEEEEHLDPKLEEEEEEGVGNDEEMAFLGKDKPSSENNEEKLVSKFDKLPVKIVQRNDPFVVDCSDKLGRVQEFDSGLLHWRIGGGDTTEHIQTHFESKIELLPSRPYVPCPTPPRKHLTTVEGTPGTTEQEGPPPDGLPEKRITATMDDMLSTRSSTLTDEGAKSAEATKESSKFPFGISPAQSHRNIKILEDEPHSKDETPLCTLLDWQDSLAKRCVCVSNTIRSLSFVPGNDFEMSKHPGLLLILGKLILLHHKHPERKQAPLTYEKEEEQDQGVSCDKVEWWWDCLEMLRENTLVTLANISGQLDLSPYPESICLPVLDGLLHWAVCPSAEAQDPFSTLGPNAVLSPQRLVLETLSKLSIQDNNVDLILATPPFSRLEKLYSTMVRFLSDRKNPVCREMAVVLLANLAQGDSLAARAIAVQKGSIGNLLGFLEDSLAATQFQQSQASLLHMQNPPFEPTSVDMMRRAARALLALAKVDENHSEFTLYESRLLDISVSPLMNSLVSQVICDVLFLIGQS</sequence>
<evidence type="ECO:0000250" key="1">
    <source>
        <dbReference type="UniProtKB" id="O14497"/>
    </source>
</evidence>
<evidence type="ECO:0000255" key="2">
    <source>
        <dbReference type="PROSITE-ProRule" id="PRU00355"/>
    </source>
</evidence>
<evidence type="ECO:0000256" key="3">
    <source>
        <dbReference type="SAM" id="MobiDB-lite"/>
    </source>
</evidence>
<evidence type="ECO:0000269" key="4">
    <source>
    </source>
</evidence>
<evidence type="ECO:0000269" key="5">
    <source>
    </source>
</evidence>
<evidence type="ECO:0000269" key="6">
    <source>
    </source>
</evidence>
<evidence type="ECO:0000303" key="7">
    <source>
    </source>
</evidence>
<evidence type="ECO:0000303" key="8">
    <source>
    </source>
</evidence>
<evidence type="ECO:0000303" key="9">
    <source>
    </source>
</evidence>
<evidence type="ECO:0000303" key="10">
    <source>
    </source>
</evidence>
<evidence type="ECO:0000305" key="11"/>
<evidence type="ECO:0007744" key="12">
    <source>
    </source>
</evidence>
<evidence type="ECO:0007744" key="13">
    <source>
    </source>
</evidence>
<evidence type="ECO:0007744" key="14">
    <source>
    </source>
</evidence>
<evidence type="ECO:0007744" key="15">
    <source>
    </source>
</evidence>
<feature type="initiator methionine" description="Removed" evidence="1">
    <location>
        <position position="1"/>
    </location>
</feature>
<feature type="chain" id="PRO_0000391619" description="AT-rich interactive domain-containing protein 1A">
    <location>
        <begin position="2"/>
        <end position="2283"/>
    </location>
</feature>
<feature type="domain" description="ARID" evidence="2">
    <location>
        <begin position="1018"/>
        <end position="1109"/>
    </location>
</feature>
<feature type="region of interest" description="Disordered" evidence="3">
    <location>
        <begin position="1"/>
        <end position="333"/>
    </location>
</feature>
<feature type="region of interest" description="Disordered" evidence="3">
    <location>
        <begin position="346"/>
        <end position="822"/>
    </location>
</feature>
<feature type="region of interest" description="Disordered" evidence="3">
    <location>
        <begin position="979"/>
        <end position="1006"/>
    </location>
</feature>
<feature type="region of interest" description="Disordered" evidence="3">
    <location>
        <begin position="1114"/>
        <end position="1484"/>
    </location>
</feature>
<feature type="region of interest" description="Disordered" evidence="3">
    <location>
        <begin position="1539"/>
        <end position="1636"/>
    </location>
</feature>
<feature type="region of interest" description="Disordered" evidence="3">
    <location>
        <begin position="1757"/>
        <end position="1782"/>
    </location>
</feature>
<feature type="region of interest" description="Disordered" evidence="3">
    <location>
        <begin position="1872"/>
        <end position="1904"/>
    </location>
</feature>
<feature type="region of interest" description="Disordered" evidence="3">
    <location>
        <begin position="1917"/>
        <end position="1941"/>
    </location>
</feature>
<feature type="short sequence motif" description="LXXLL">
    <location>
        <begin position="296"/>
        <end position="300"/>
    </location>
</feature>
<feature type="short sequence motif" description="Nuclear localization signal" evidence="1">
    <location>
        <begin position="1369"/>
        <end position="1388"/>
    </location>
</feature>
<feature type="short sequence motif" description="LXXLL">
    <location>
        <begin position="1710"/>
        <end position="1714"/>
    </location>
</feature>
<feature type="short sequence motif" description="LXXLL">
    <location>
        <begin position="1965"/>
        <end position="1969"/>
    </location>
</feature>
<feature type="short sequence motif" description="LXXLL">
    <location>
        <begin position="2083"/>
        <end position="2087"/>
    </location>
</feature>
<feature type="compositionally biased region" description="Low complexity" evidence="3">
    <location>
        <begin position="1"/>
        <end position="10"/>
    </location>
</feature>
<feature type="compositionally biased region" description="Basic and acidic residues" evidence="3">
    <location>
        <begin position="22"/>
        <end position="34"/>
    </location>
</feature>
<feature type="compositionally biased region" description="Gly residues" evidence="3">
    <location>
        <begin position="77"/>
        <end position="93"/>
    </location>
</feature>
<feature type="compositionally biased region" description="Low complexity" evidence="3">
    <location>
        <begin position="128"/>
        <end position="143"/>
    </location>
</feature>
<feature type="compositionally biased region" description="Low complexity" evidence="3">
    <location>
        <begin position="233"/>
        <end position="266"/>
    </location>
</feature>
<feature type="compositionally biased region" description="Gly residues" evidence="3">
    <location>
        <begin position="274"/>
        <end position="287"/>
    </location>
</feature>
<feature type="compositionally biased region" description="Polar residues" evidence="3">
    <location>
        <begin position="296"/>
        <end position="307"/>
    </location>
</feature>
<feature type="compositionally biased region" description="Gly residues" evidence="3">
    <location>
        <begin position="311"/>
        <end position="328"/>
    </location>
</feature>
<feature type="compositionally biased region" description="Low complexity" evidence="3">
    <location>
        <begin position="402"/>
        <end position="427"/>
    </location>
</feature>
<feature type="compositionally biased region" description="Polar residues" evidence="3">
    <location>
        <begin position="438"/>
        <end position="451"/>
    </location>
</feature>
<feature type="compositionally biased region" description="Polar residues" evidence="3">
    <location>
        <begin position="459"/>
        <end position="470"/>
    </location>
</feature>
<feature type="compositionally biased region" description="Low complexity" evidence="3">
    <location>
        <begin position="471"/>
        <end position="547"/>
    </location>
</feature>
<feature type="compositionally biased region" description="Low complexity" evidence="3">
    <location>
        <begin position="554"/>
        <end position="596"/>
    </location>
</feature>
<feature type="compositionally biased region" description="Low complexity" evidence="3">
    <location>
        <begin position="611"/>
        <end position="622"/>
    </location>
</feature>
<feature type="compositionally biased region" description="Polar residues" evidence="3">
    <location>
        <begin position="629"/>
        <end position="638"/>
    </location>
</feature>
<feature type="compositionally biased region" description="Low complexity" evidence="3">
    <location>
        <begin position="659"/>
        <end position="675"/>
    </location>
</feature>
<feature type="compositionally biased region" description="Polar residues" evidence="3">
    <location>
        <begin position="676"/>
        <end position="686"/>
    </location>
</feature>
<feature type="compositionally biased region" description="Polar residues" evidence="3">
    <location>
        <begin position="731"/>
        <end position="748"/>
    </location>
</feature>
<feature type="compositionally biased region" description="Polar residues" evidence="3">
    <location>
        <begin position="756"/>
        <end position="794"/>
    </location>
</feature>
<feature type="compositionally biased region" description="Low complexity" evidence="3">
    <location>
        <begin position="795"/>
        <end position="822"/>
    </location>
</feature>
<feature type="compositionally biased region" description="Low complexity" evidence="3">
    <location>
        <begin position="1142"/>
        <end position="1155"/>
    </location>
</feature>
<feature type="compositionally biased region" description="Pro residues" evidence="3">
    <location>
        <begin position="1163"/>
        <end position="1178"/>
    </location>
</feature>
<feature type="compositionally biased region" description="Polar residues" evidence="3">
    <location>
        <begin position="1198"/>
        <end position="1220"/>
    </location>
</feature>
<feature type="compositionally biased region" description="Low complexity" evidence="3">
    <location>
        <begin position="1343"/>
        <end position="1368"/>
    </location>
</feature>
<feature type="compositionally biased region" description="Low complexity" evidence="3">
    <location>
        <begin position="1395"/>
        <end position="1426"/>
    </location>
</feature>
<feature type="compositionally biased region" description="Polar residues" evidence="3">
    <location>
        <begin position="1427"/>
        <end position="1436"/>
    </location>
</feature>
<feature type="compositionally biased region" description="Polar residues" evidence="3">
    <location>
        <begin position="1469"/>
        <end position="1478"/>
    </location>
</feature>
<feature type="compositionally biased region" description="Pro residues" evidence="3">
    <location>
        <begin position="1555"/>
        <end position="1579"/>
    </location>
</feature>
<feature type="compositionally biased region" description="Acidic residues" evidence="3">
    <location>
        <begin position="1761"/>
        <end position="1782"/>
    </location>
</feature>
<feature type="compositionally biased region" description="Low complexity" evidence="3">
    <location>
        <begin position="1882"/>
        <end position="1893"/>
    </location>
</feature>
<feature type="compositionally biased region" description="Basic and acidic residues" evidence="3">
    <location>
        <begin position="1923"/>
        <end position="1935"/>
    </location>
</feature>
<feature type="modified residue" description="N-acetylalanine" evidence="1">
    <location>
        <position position="2"/>
    </location>
</feature>
<feature type="modified residue" description="Phosphoserine" evidence="1">
    <location>
        <position position="56"/>
    </location>
</feature>
<feature type="modified residue" description="Phosphoserine" evidence="1">
    <location>
        <position position="77"/>
    </location>
</feature>
<feature type="modified residue" description="Phosphoserine" evidence="1">
    <location>
        <position position="234"/>
    </location>
</feature>
<feature type="modified residue" description="Phosphothreonine" evidence="1">
    <location>
        <position position="287"/>
    </location>
</feature>
<feature type="modified residue" description="Phosphoserine" evidence="1">
    <location>
        <position position="302"/>
    </location>
</feature>
<feature type="modified residue" description="Phosphoserine" evidence="13 14">
    <location>
        <position position="365"/>
    </location>
</feature>
<feature type="modified residue" description="Phosphoserine" evidence="14">
    <location>
        <position position="384"/>
    </location>
</feature>
<feature type="modified residue" description="Asymmetric dimethylarginine" evidence="15">
    <location>
        <position position="431"/>
    </location>
</feature>
<feature type="modified residue" description="Phosphoserine" evidence="1">
    <location>
        <position position="605"/>
    </location>
</feature>
<feature type="modified residue" description="Phosphoserine" evidence="12 14">
    <location>
        <position position="697"/>
    </location>
</feature>
<feature type="modified residue" description="Phosphoserine" evidence="14">
    <location>
        <position position="699"/>
    </location>
</feature>
<feature type="modified residue" description="Phosphoserine" evidence="14">
    <location>
        <position position="703"/>
    </location>
</feature>
<feature type="modified residue" description="Phosphoserine" evidence="14">
    <location>
        <position position="731"/>
    </location>
</feature>
<feature type="modified residue" description="Phosphoserine" evidence="14">
    <location>
        <position position="765"/>
    </location>
</feature>
<feature type="modified residue" description="Phosphoserine" evidence="14">
    <location>
        <position position="773"/>
    </location>
</feature>
<feature type="modified residue" description="Phosphoserine" evidence="1">
    <location>
        <position position="1185"/>
    </location>
</feature>
<feature type="modified residue" description="Phosphoserine" evidence="1">
    <location>
        <position position="1236"/>
    </location>
</feature>
<feature type="modified residue" description="Omega-N-methylarginine" evidence="15">
    <location>
        <position position="1277"/>
    </location>
</feature>
<feature type="modified residue" description="Phosphoserine" evidence="1">
    <location>
        <position position="1605"/>
    </location>
</feature>
<feature type="modified residue" description="N6-acetyllysine" evidence="1">
    <location>
        <position position="1613"/>
    </location>
</feature>
<feature type="modified residue" description="Phosphothreonine" evidence="14">
    <location>
        <position position="1874"/>
    </location>
</feature>
<feature type="modified residue" description="Phosphothreonine" evidence="1">
    <location>
        <position position="1886"/>
    </location>
</feature>
<feature type="modified residue" description="N6-acetyllysine" evidence="1">
    <location>
        <position position="1903"/>
    </location>
</feature>
<feature type="modified residue" description="Phosphoserine" evidence="1">
    <location>
        <position position="1927"/>
    </location>
</feature>
<feature type="modified residue" description="Phosphoserine" evidence="1">
    <location>
        <position position="1942"/>
    </location>
</feature>
<feature type="splice variant" id="VSP_038737" description="In isoform 2 and isoform 4." evidence="7 8">
    <location>
        <begin position="1"/>
        <end position="385"/>
    </location>
</feature>
<feature type="splice variant" id="VSP_038738" description="In isoform 4." evidence="8">
    <location>
        <position position="1181"/>
    </location>
</feature>
<feature type="splice variant" id="VSP_038739" description="In isoform 2 and isoform 4." evidence="7 8">
    <original>Q</original>
    <variation>QQQQQR</variation>
    <location>
        <position position="1336"/>
    </location>
</feature>
<feature type="splice variant" id="VSP_038740" description="In isoform 3." evidence="11">
    <location>
        <begin position="1367"/>
        <end position="1583"/>
    </location>
</feature>
<feature type="sequence conflict" description="In Ref. 1; AAK54504." evidence="11" ref="1">
    <original>S</original>
    <variation>F</variation>
    <location>
        <position position="697"/>
    </location>
</feature>
<feature type="sequence conflict" description="In Ref. 1; AAK54504." evidence="11" ref="1">
    <original>D</original>
    <variation>E</variation>
    <location>
        <position position="750"/>
    </location>
</feature>
<feature type="sequence conflict" description="In Ref. 1; AAK54504." evidence="11" ref="1">
    <original>P</original>
    <variation>S</variation>
    <location>
        <position position="758"/>
    </location>
</feature>
<feature type="sequence conflict" description="In Ref. 1; AAK54504." evidence="11" ref="1">
    <original>M</original>
    <variation>I</variation>
    <location>
        <position position="833"/>
    </location>
</feature>
<feature type="sequence conflict" description="In Ref. 1; AAK54504." evidence="11" ref="1">
    <original>K</original>
    <variation>Q</variation>
    <location>
        <position position="1011"/>
    </location>
</feature>
<feature type="sequence conflict" description="In Ref. 1; AAK54504." evidence="11" ref="1">
    <original>P</original>
    <variation>H</variation>
    <location>
        <position position="1148"/>
    </location>
</feature>
<feature type="sequence conflict" description="In Ref. 1; AAK54504." evidence="11" ref="1">
    <original>SR</original>
    <variation>G</variation>
    <location>
        <begin position="1181"/>
        <end position="1182"/>
    </location>
</feature>
<feature type="sequence conflict" description="In Ref. 1; AAK54504." evidence="11" ref="1">
    <original>M</original>
    <variation>I</variation>
    <location>
        <position position="1635"/>
    </location>
</feature>
<feature type="sequence conflict" description="In Ref. 1; AAK54504." evidence="11" ref="1">
    <original>Y</original>
    <variation>S</variation>
    <location>
        <position position="1755"/>
    </location>
</feature>
<feature type="sequence conflict" description="In Ref. 1; AAK54504." evidence="11" ref="1">
    <original>S</original>
    <variation>P</variation>
    <location>
        <position position="1795"/>
    </location>
</feature>
<feature type="sequence conflict" description="In Ref. 1; AAK54504." evidence="11" ref="1">
    <original>N</original>
    <variation>S</variation>
    <location>
        <position position="1799"/>
    </location>
</feature>
<feature type="sequence conflict" description="In Ref. 1; AAK54504." evidence="11" ref="1">
    <original>E</original>
    <variation>D</variation>
    <location>
        <position position="1929"/>
    </location>
</feature>
<feature type="sequence conflict" description="In Ref. 1; AAK54504." evidence="11" ref="1">
    <original>E</original>
    <variation>D</variation>
    <location>
        <position position="1956"/>
    </location>
</feature>
<feature type="sequence conflict" description="In Ref. 1; AAK54504." evidence="11" ref="1">
    <original>S</original>
    <variation>P</variation>
    <location>
        <position position="1974"/>
    </location>
</feature>
<feature type="sequence conflict" description="In Ref. 1; AAK54504." evidence="11" ref="1">
    <original>A</original>
    <variation>P</variation>
    <location>
        <position position="2233"/>
    </location>
</feature>
<organism>
    <name type="scientific">Mus musculus</name>
    <name type="common">Mouse</name>
    <dbReference type="NCBI Taxonomy" id="10090"/>
    <lineage>
        <taxon>Eukaryota</taxon>
        <taxon>Metazoa</taxon>
        <taxon>Chordata</taxon>
        <taxon>Craniata</taxon>
        <taxon>Vertebrata</taxon>
        <taxon>Euteleostomi</taxon>
        <taxon>Mammalia</taxon>
        <taxon>Eutheria</taxon>
        <taxon>Euarchontoglires</taxon>
        <taxon>Glires</taxon>
        <taxon>Rodentia</taxon>
        <taxon>Myomorpha</taxon>
        <taxon>Muroidea</taxon>
        <taxon>Muridae</taxon>
        <taxon>Murinae</taxon>
        <taxon>Mus</taxon>
        <taxon>Mus</taxon>
    </lineage>
</organism>
<protein>
    <recommendedName>
        <fullName>AT-rich interactive domain-containing protein 1A</fullName>
        <shortName>ARID domain-containing protein 1A</shortName>
    </recommendedName>
    <alternativeName>
        <fullName>BRG1-associated factor 250</fullName>
        <shortName>BAF250</shortName>
    </alternativeName>
    <alternativeName>
        <fullName>BRG1-associated factor 250a</fullName>
        <shortName>BAF250A</shortName>
    </alternativeName>
    <alternativeName>
        <fullName>Osa homolog 1</fullName>
    </alternativeName>
    <alternativeName>
        <fullName>SWI-like protein</fullName>
    </alternativeName>
    <alternativeName>
        <fullName>SWI/SNF complex protein p270</fullName>
    </alternativeName>
    <alternativeName>
        <fullName>SWI/SNF-related, matrix-associated, actin-dependent regulator of chromatin subfamily F member 1</fullName>
    </alternativeName>
</protein>
<comment type="function">
    <text evidence="1 5 9 10">Involved in transcriptional activation and repression of select genes by chromatin remodeling (alteration of DNA-nucleosome topology). Component of SWI/SNF chromatin remodeling complexes that carry out key enzymatic activities, changing chromatin structure by altering DNA-histone contacts within a nucleosome in an ATP-dependent manner. Binds DNA non-specifically (PubMed:22952240, PubMed:26601204). Belongs to the neural progenitors-specific chromatin remodeling complex (npBAF complex) and the neuron-specific chromatin remodeling complex (nBAF complex). During neural development a switch from a stem/progenitor to a postmitotic chromatin remodeling mechanism occurs as neurons exit the cell cycle and become committed to their adult state. The transition from proliferating neural stem/progenitor cells to postmitotic neurons requires a switch in subunit composition of the npBAF and nBAF complexes. As neural progenitors exit mitosis and differentiate into neurons, npBAF complexes which contain ACTL6A/BAF53A and PHF10/BAF45A, are exchanged for homologous alternative ACTL6B/BAF53B and DPF1/BAF45B or DPF3/BAF45C subunits in neuron-specific complexes (nBAF). The npBAF complex is essential for the self-renewal/proliferative capacity of the multipotent neural stem cells. The nBAF complex along with CREST plays a role regulating the activity of genes essential for dendrite growth (PubMed:17640523).</text>
</comment>
<comment type="subunit">
    <text evidence="1 5 6 9 10">Component of SWI/SNF chromatin remodeling complexes, in some of which it can be mutually exclusive with ARID1B/BAF250B. The canonical complex contains a catalytic subunit (either SMARCA4/BRG1/BAF190A or SMARCA2/BRM/BAF190B) and at least SMARCE1, ACTL6A/BAF53, SMARCC1/BAF155, SMARCC2/BAF170, and SMARCB1/SNF5/BAF47. Other subunits specific to each of the complexes may also be present permitting several possible combinations developmentally and tissue specific. Component of the BAF (SWI/SNF-A) complex, which includes at least actin (ACTB), ARID1A/BAF250A, ARID1B/BAF250B, SMARCA2/BRM, SMARCA4/BRG1/BAF190A, ACTL6A/BAF53, ACTL6B/BAF53B, SMARCE1/BAF57, SMARCC1/BAF155, SMARCC2/BAF170, SMARCB1/SNF5/INI1, and one or more SMARCD1/BAF60A, SMARCD2/BAF60B, or SMARCD3/BAF60C (By similarity). In muscle cells, the BAF complex also contains DPF3. Component of neural progenitors-specific chromatin remodeling complex (npBAF complex) composed of at least, ARID1A/BAF250A or ARID1B/BAF250B, SMARCD1/BAF60A, SMARCD3/BAF60C, SMARCA2/BRM/BAF190B, SMARCA4/BRG1/BAF190A, SMARCB1/BAF47, SMARCC1/BAF155, SMARCE1/BAF57, SMARCC2/BAF170, PHF10/BAF45A, ACTL6A/BAF53A and actin. Component of neuron-specific chromatin remodeling complex (nBAF complex) composed of at least, ARID1A/BAF250A or ARID1B/BAF250B, SMARCD1/BAF60A, SMARCD3/BAF60C, SMARCA2/BRM/BAF190B, SMARCA4/BRG1/BAF190A, SMARCB1/BAF47, SMARCC1/BAF155, SMARCE1/BAF57, SMARCC2/BAF170, DPF1/BAF45B, DPF3/BAF45C, ACTL6B/BAF53B and actin (PubMed:17640523). Component of a SWI/SNF-like EBAFa complex, at least composed of SMARCA4/BRG1/BAF190A, SMARCB1/BAF47/SNF5, ACTL6A/BAF53A, SMARCE1/BAF57, SMARCD1/BAF60A, SMARCC1/BAF155, SMARCC2/BAF170, BAF250A and MLLT1/ENL. Interacts through its C-terminus with SMARCA2/BRM/BAF190B and SMARCA4/BRG1/BAF190A. Interacts with SMARCC1/BAF155 (By similarity). Interacts with FOS (via bZIP domain and leucine-zipper region), FOSB isoform 1 and 2, FOSL1 and FOSL2 (PubMed:29272704).</text>
</comment>
<comment type="interaction">
    <interactant intactId="EBI-371499">
        <id>A2BH40</id>
    </interactant>
    <interactant intactId="EBI-371515">
        <id>O35845</id>
        <label>Smarca4</label>
    </interactant>
    <organismsDiffer>false</organismsDiffer>
    <experiments>2</experiments>
</comment>
<comment type="interaction">
    <interactant intactId="EBI-371499">
        <id>A2BH40</id>
    </interactant>
    <interactant intactId="EBI-1210244">
        <id>Q3TKT4</id>
        <label>Smarca4</label>
    </interactant>
    <organismsDiffer>false</organismsDiffer>
    <experiments>7</experiments>
</comment>
<comment type="subcellular location">
    <subcellularLocation>
        <location evidence="2">Nucleus</location>
    </subcellularLocation>
</comment>
<comment type="alternative products">
    <event type="alternative splicing"/>
    <isoform>
        <id>A2BH40-1</id>
        <name>1</name>
        <sequence type="displayed"/>
    </isoform>
    <isoform>
        <id>A2BH40-2</id>
        <name>2</name>
        <sequence type="described" ref="VSP_038737 VSP_038739"/>
    </isoform>
    <isoform>
        <id>A2BH40-3</id>
        <name>3</name>
        <sequence type="described" ref="VSP_038740"/>
    </isoform>
    <isoform>
        <id>A2BH40-4</id>
        <name>4</name>
        <sequence type="described" ref="VSP_038737 VSP_038738 VSP_038739"/>
    </isoform>
</comment>
<comment type="tissue specificity">
    <text evidence="4">Widely expressed. Expressed at high levels in the testis.</text>
</comment>
<comment type="developmental stage">
    <text evidence="4 5">Expressed ubiquitously throughout the developing spinal cord, brain and other embryonic tissues at 10.5 dpc-16.5 dpc. In the earlier stages at 9.5 dpc and 10.5 dpc, is fairly ubiquitous though with clearly elevated expression in the progress zone and lateral mesoderm of limb buds, optic and otic vesicle, neural tube, and brain. Later on at 11.5 dpc and 12.5 dpc, expression becomes more restricted and is confined to the interdigital area of limbs, dorsal mes/metencephalon, neocortex, and neural tube. Expression is seen in the eye lens from 10.5 dpc until 12.5 dpc.</text>
</comment>